<accession>P52164</accession>
<dbReference type="EMBL" id="D14447">
    <property type="protein sequence ID" value="BAA03337.1"/>
    <property type="molecule type" value="mRNA"/>
</dbReference>
<dbReference type="EMBL" id="D14448">
    <property type="protein sequence ID" value="BAA03338.1"/>
    <property type="molecule type" value="mRNA"/>
</dbReference>
<dbReference type="PIR" id="S39792">
    <property type="entry name" value="S39792"/>
</dbReference>
<dbReference type="RefSeq" id="NP_001398892.1">
    <molecule id="P52164-2"/>
    <property type="nucleotide sequence ID" value="NM_001411963.1"/>
</dbReference>
<dbReference type="RefSeq" id="NP_071546.1">
    <molecule id="P52164-1"/>
    <property type="nucleotide sequence ID" value="NM_022210.2"/>
</dbReference>
<dbReference type="RefSeq" id="XP_006240310.1">
    <property type="nucleotide sequence ID" value="XM_006240248.3"/>
</dbReference>
<dbReference type="BMRB" id="P52164"/>
<dbReference type="SMR" id="P52164"/>
<dbReference type="FunCoup" id="P52164">
    <property type="interactions" value="3081"/>
</dbReference>
<dbReference type="IntAct" id="P52164">
    <property type="interactions" value="3"/>
</dbReference>
<dbReference type="MINT" id="P52164"/>
<dbReference type="STRING" id="10116.ENSRNOP00000072268"/>
<dbReference type="iPTMnet" id="P52164"/>
<dbReference type="PhosphoSitePlus" id="P52164"/>
<dbReference type="PaxDb" id="10116-ENSRNOP00000010954"/>
<dbReference type="Ensembl" id="ENSRNOT00000106817.1">
    <molecule id="P52164-1"/>
    <property type="protein sequence ID" value="ENSRNOP00000086002.1"/>
    <property type="gene ID" value="ENSRNOG00000008049.9"/>
</dbReference>
<dbReference type="GeneID" id="60661"/>
<dbReference type="KEGG" id="rno:60661"/>
<dbReference type="UCSC" id="RGD:621101">
    <molecule id="P52164-1"/>
    <property type="organism name" value="rat"/>
</dbReference>
<dbReference type="AGR" id="RGD:621101"/>
<dbReference type="CTD" id="4149"/>
<dbReference type="RGD" id="621101">
    <property type="gene designation" value="Max"/>
</dbReference>
<dbReference type="eggNOG" id="KOG2483">
    <property type="taxonomic scope" value="Eukaryota"/>
</dbReference>
<dbReference type="GeneTree" id="ENSGT00530000064011"/>
<dbReference type="HOGENOM" id="CLU_2346156_0_0_1"/>
<dbReference type="InParanoid" id="P52164"/>
<dbReference type="OMA" id="YRRMSEN"/>
<dbReference type="OrthoDB" id="8964853at2759"/>
<dbReference type="PhylomeDB" id="P52164"/>
<dbReference type="TreeFam" id="TF318841"/>
<dbReference type="Reactome" id="R-RNO-8953750">
    <property type="pathway name" value="Transcriptional Regulation by E2F6"/>
</dbReference>
<dbReference type="PRO" id="PR:P52164"/>
<dbReference type="Proteomes" id="UP000002494">
    <property type="component" value="Chromosome 6"/>
</dbReference>
<dbReference type="Bgee" id="ENSRNOG00000008049">
    <property type="expression patterns" value="Expressed in jejunum and 19 other cell types or tissues"/>
</dbReference>
<dbReference type="ExpressionAtlas" id="P52164">
    <property type="expression patterns" value="baseline and differential"/>
</dbReference>
<dbReference type="GO" id="GO:0000785">
    <property type="term" value="C:chromatin"/>
    <property type="evidence" value="ECO:0000266"/>
    <property type="project" value="RGD"/>
</dbReference>
<dbReference type="GO" id="GO:0030425">
    <property type="term" value="C:dendrite"/>
    <property type="evidence" value="ECO:0000314"/>
    <property type="project" value="RGD"/>
</dbReference>
<dbReference type="GO" id="GO:0070443">
    <property type="term" value="C:Mad-Max complex"/>
    <property type="evidence" value="ECO:0000266"/>
    <property type="project" value="RGD"/>
</dbReference>
<dbReference type="GO" id="GO:0071339">
    <property type="term" value="C:MLL1 complex"/>
    <property type="evidence" value="ECO:0000250"/>
    <property type="project" value="UniProtKB"/>
</dbReference>
<dbReference type="GO" id="GO:0071943">
    <property type="term" value="C:Myc-Max complex"/>
    <property type="evidence" value="ECO:0000266"/>
    <property type="project" value="RGD"/>
</dbReference>
<dbReference type="GO" id="GO:0005634">
    <property type="term" value="C:nucleus"/>
    <property type="evidence" value="ECO:0000314"/>
    <property type="project" value="RGD"/>
</dbReference>
<dbReference type="GO" id="GO:0016605">
    <property type="term" value="C:PML body"/>
    <property type="evidence" value="ECO:0000314"/>
    <property type="project" value="RGD"/>
</dbReference>
<dbReference type="GO" id="GO:0032993">
    <property type="term" value="C:protein-DNA complex"/>
    <property type="evidence" value="ECO:0000266"/>
    <property type="project" value="RGD"/>
</dbReference>
<dbReference type="GO" id="GO:0090575">
    <property type="term" value="C:RNA polymerase II transcription regulator complex"/>
    <property type="evidence" value="ECO:0000266"/>
    <property type="project" value="RGD"/>
</dbReference>
<dbReference type="GO" id="GO:0003677">
    <property type="term" value="F:DNA binding"/>
    <property type="evidence" value="ECO:0000266"/>
    <property type="project" value="RGD"/>
</dbReference>
<dbReference type="GO" id="GO:0003700">
    <property type="term" value="F:DNA-binding transcription factor activity"/>
    <property type="evidence" value="ECO:0000315"/>
    <property type="project" value="RGD"/>
</dbReference>
<dbReference type="GO" id="GO:0000981">
    <property type="term" value="F:DNA-binding transcription factor activity, RNA polymerase II-specific"/>
    <property type="evidence" value="ECO:0000266"/>
    <property type="project" value="RGD"/>
</dbReference>
<dbReference type="GO" id="GO:0140297">
    <property type="term" value="F:DNA-binding transcription factor binding"/>
    <property type="evidence" value="ECO:0000266"/>
    <property type="project" value="RGD"/>
</dbReference>
<dbReference type="GO" id="GO:0001227">
    <property type="term" value="F:DNA-binding transcription repressor activity, RNA polymerase II-specific"/>
    <property type="evidence" value="ECO:0000250"/>
    <property type="project" value="UniProtKB"/>
</dbReference>
<dbReference type="GO" id="GO:0070888">
    <property type="term" value="F:E-box binding"/>
    <property type="evidence" value="ECO:0000266"/>
    <property type="project" value="RGD"/>
</dbReference>
<dbReference type="GO" id="GO:0042802">
    <property type="term" value="F:identical protein binding"/>
    <property type="evidence" value="ECO:0000353"/>
    <property type="project" value="RGD"/>
</dbReference>
<dbReference type="GO" id="GO:0046983">
    <property type="term" value="F:protein dimerization activity"/>
    <property type="evidence" value="ECO:0007669"/>
    <property type="project" value="InterPro"/>
</dbReference>
<dbReference type="GO" id="GO:0044877">
    <property type="term" value="F:protein-containing complex binding"/>
    <property type="evidence" value="ECO:0000314"/>
    <property type="project" value="RGD"/>
</dbReference>
<dbReference type="GO" id="GO:0000978">
    <property type="term" value="F:RNA polymerase II cis-regulatory region sequence-specific DNA binding"/>
    <property type="evidence" value="ECO:0000266"/>
    <property type="project" value="RGD"/>
</dbReference>
<dbReference type="GO" id="GO:0043565">
    <property type="term" value="F:sequence-specific DNA binding"/>
    <property type="evidence" value="ECO:0000314"/>
    <property type="project" value="RGD"/>
</dbReference>
<dbReference type="GO" id="GO:1990837">
    <property type="term" value="F:sequence-specific double-stranded DNA binding"/>
    <property type="evidence" value="ECO:0000266"/>
    <property type="project" value="RGD"/>
</dbReference>
<dbReference type="GO" id="GO:0071375">
    <property type="term" value="P:cellular response to peptide hormone stimulus"/>
    <property type="evidence" value="ECO:0000270"/>
    <property type="project" value="RGD"/>
</dbReference>
<dbReference type="GO" id="GO:0009267">
    <property type="term" value="P:cellular response to starvation"/>
    <property type="evidence" value="ECO:0000270"/>
    <property type="project" value="RGD"/>
</dbReference>
<dbReference type="GO" id="GO:0010629">
    <property type="term" value="P:negative regulation of gene expression"/>
    <property type="evidence" value="ECO:0000314"/>
    <property type="project" value="RGD"/>
</dbReference>
<dbReference type="GO" id="GO:0000122">
    <property type="term" value="P:negative regulation of transcription by RNA polymerase II"/>
    <property type="evidence" value="ECO:0000266"/>
    <property type="project" value="RGD"/>
</dbReference>
<dbReference type="GO" id="GO:0051402">
    <property type="term" value="P:neuron apoptotic process"/>
    <property type="evidence" value="ECO:0000270"/>
    <property type="project" value="RGD"/>
</dbReference>
<dbReference type="GO" id="GO:0045893">
    <property type="term" value="P:positive regulation of DNA-templated transcription"/>
    <property type="evidence" value="ECO:0000266"/>
    <property type="project" value="RGD"/>
</dbReference>
<dbReference type="GO" id="GO:0045944">
    <property type="term" value="P:positive regulation of transcription by RNA polymerase II"/>
    <property type="evidence" value="ECO:0000266"/>
    <property type="project" value="RGD"/>
</dbReference>
<dbReference type="GO" id="GO:0065003">
    <property type="term" value="P:protein-containing complex assembly"/>
    <property type="evidence" value="ECO:0000314"/>
    <property type="project" value="RGD"/>
</dbReference>
<dbReference type="GO" id="GO:0006355">
    <property type="term" value="P:regulation of DNA-templated transcription"/>
    <property type="evidence" value="ECO:0000315"/>
    <property type="project" value="RGD"/>
</dbReference>
<dbReference type="GO" id="GO:0006357">
    <property type="term" value="P:regulation of transcription by RNA polymerase II"/>
    <property type="evidence" value="ECO:0000266"/>
    <property type="project" value="RGD"/>
</dbReference>
<dbReference type="GO" id="GO:0048678">
    <property type="term" value="P:response to axon injury"/>
    <property type="evidence" value="ECO:0000270"/>
    <property type="project" value="RGD"/>
</dbReference>
<dbReference type="GO" id="GO:0032868">
    <property type="term" value="P:response to insulin"/>
    <property type="evidence" value="ECO:0000270"/>
    <property type="project" value="RGD"/>
</dbReference>
<dbReference type="GO" id="GO:0060041">
    <property type="term" value="P:retina development in camera-type eye"/>
    <property type="evidence" value="ECO:0000270"/>
    <property type="project" value="RGD"/>
</dbReference>
<dbReference type="CDD" id="cd11406">
    <property type="entry name" value="bHLHzip_Max"/>
    <property type="match status" value="1"/>
</dbReference>
<dbReference type="FunFam" id="4.10.280.10:FF:000023">
    <property type="entry name" value="MAX isoform 13"/>
    <property type="match status" value="1"/>
</dbReference>
<dbReference type="Gene3D" id="4.10.280.10">
    <property type="entry name" value="Helix-loop-helix DNA-binding domain"/>
    <property type="match status" value="1"/>
</dbReference>
<dbReference type="InterPro" id="IPR011598">
    <property type="entry name" value="bHLH_dom"/>
</dbReference>
<dbReference type="InterPro" id="IPR036638">
    <property type="entry name" value="HLH_DNA-bd_sf"/>
</dbReference>
<dbReference type="PANTHER" id="PTHR10328:SF3">
    <property type="entry name" value="PROTEIN MAX"/>
    <property type="match status" value="1"/>
</dbReference>
<dbReference type="PANTHER" id="PTHR10328">
    <property type="entry name" value="PROTEIN MAX MYC-ASSOCIATED FACTOR X"/>
    <property type="match status" value="1"/>
</dbReference>
<dbReference type="Pfam" id="PF00010">
    <property type="entry name" value="HLH"/>
    <property type="match status" value="1"/>
</dbReference>
<dbReference type="SMART" id="SM00353">
    <property type="entry name" value="HLH"/>
    <property type="match status" value="1"/>
</dbReference>
<dbReference type="SUPFAM" id="SSF47459">
    <property type="entry name" value="HLH, helix-loop-helix DNA-binding domain"/>
    <property type="match status" value="1"/>
</dbReference>
<dbReference type="PROSITE" id="PS50888">
    <property type="entry name" value="BHLH"/>
    <property type="match status" value="1"/>
</dbReference>
<name>MAX_RAT</name>
<protein>
    <recommendedName>
        <fullName evidence="1">Protein max</fullName>
    </recommendedName>
    <alternativeName>
        <fullName evidence="1">Myc-associated factor X</fullName>
    </alternativeName>
</protein>
<reference key="1">
    <citation type="journal article" date="1993" name="Biochim. Biophys. Acta">
        <title>Molecular cloning and sequencing of rat Max cDNA: castration-induced expression of the 2 kb transcript in male accessory sex organs of rats.</title>
        <authorList>
            <person name="Izawa M."/>
        </authorList>
    </citation>
    <scope>NUCLEOTIDE SEQUENCE [MRNA] (ISOFORMS LONG AND SHORT)</scope>
    <source>
        <strain>Wistar</strain>
        <tissue>Seminal vesicle</tissue>
    </source>
</reference>
<reference key="2">
    <citation type="journal article" date="2007" name="EMBO J.">
        <title>Abelson interacting protein 1 (Abi-1) is essential for dendrite morphogenesis and synapse formation.</title>
        <authorList>
            <person name="Proepper C."/>
            <person name="Johannsen S."/>
            <person name="Liebau S."/>
            <person name="Dahl J."/>
            <person name="Vaida B."/>
            <person name="Bockmann J."/>
            <person name="Kreutz M.R."/>
            <person name="Gundelfinger E.D."/>
            <person name="Boeckers T.M."/>
        </authorList>
    </citation>
    <scope>FUNCTION AS TRANSCRIPTION REGULATOR</scope>
    <scope>INTERACTION WITH ABI1</scope>
    <scope>SUBCELLULAR LOCATION</scope>
</reference>
<reference key="3">
    <citation type="journal article" date="2012" name="Nat. Commun.">
        <title>Quantitative maps of protein phosphorylation sites across 14 different rat organs and tissues.</title>
        <authorList>
            <person name="Lundby A."/>
            <person name="Secher A."/>
            <person name="Lage K."/>
            <person name="Nordsborg N.B."/>
            <person name="Dmytriyev A."/>
            <person name="Lundby C."/>
            <person name="Olsen J.V."/>
        </authorList>
    </citation>
    <scope>PHOSPHORYLATION [LARGE SCALE ANALYSIS] AT SER-2 AND SER-11</scope>
    <scope>PHOSPHORYLATION [LARGE SCALE ANALYSIS] AT SER-2 AND SER-11 (ISOFORM SHORT)</scope>
    <scope>IDENTIFICATION BY MASS SPECTROMETRY [LARGE SCALE ANALYSIS]</scope>
</reference>
<evidence type="ECO:0000250" key="1">
    <source>
        <dbReference type="UniProtKB" id="P61244"/>
    </source>
</evidence>
<evidence type="ECO:0000255" key="2">
    <source>
        <dbReference type="PROSITE-ProRule" id="PRU00981"/>
    </source>
</evidence>
<evidence type="ECO:0000256" key="3">
    <source>
        <dbReference type="SAM" id="MobiDB-lite"/>
    </source>
</evidence>
<evidence type="ECO:0000269" key="4">
    <source>
    </source>
</evidence>
<evidence type="ECO:0000303" key="5">
    <source>
    </source>
</evidence>
<evidence type="ECO:0000305" key="6"/>
<evidence type="ECO:0000312" key="7">
    <source>
        <dbReference type="RGD" id="621101"/>
    </source>
</evidence>
<evidence type="ECO:0007744" key="8">
    <source>
    </source>
</evidence>
<feature type="initiator methionine" description="Removed" evidence="1">
    <location>
        <position position="1"/>
    </location>
</feature>
<feature type="chain" id="PRO_0000127271" description="Protein max">
    <location>
        <begin position="2"/>
        <end position="160"/>
    </location>
</feature>
<feature type="domain" description="bHLH" evidence="2">
    <location>
        <begin position="23"/>
        <end position="74"/>
    </location>
</feature>
<feature type="region of interest" description="Disordered" evidence="3">
    <location>
        <begin position="1"/>
        <end position="40"/>
    </location>
</feature>
<feature type="region of interest" description="Leucine-zipper">
    <location>
        <begin position="81"/>
        <end position="102"/>
    </location>
</feature>
<feature type="region of interest" description="Disordered" evidence="3">
    <location>
        <begin position="105"/>
        <end position="160"/>
    </location>
</feature>
<feature type="compositionally biased region" description="Acidic residues" evidence="3">
    <location>
        <begin position="1"/>
        <end position="13"/>
    </location>
</feature>
<feature type="compositionally biased region" description="Basic and acidic residues" evidence="3">
    <location>
        <begin position="29"/>
        <end position="40"/>
    </location>
</feature>
<feature type="compositionally biased region" description="Polar residues" evidence="3">
    <location>
        <begin position="107"/>
        <end position="124"/>
    </location>
</feature>
<feature type="modified residue" description="N-acetylserine" evidence="1">
    <location>
        <position position="2"/>
    </location>
</feature>
<feature type="modified residue" description="Phosphoserine" evidence="8">
    <location>
        <position position="2"/>
    </location>
</feature>
<feature type="modified residue" description="Phosphoserine" evidence="8">
    <location>
        <position position="11"/>
    </location>
</feature>
<feature type="modified residue" description="N6-acetyllysine" evidence="1">
    <location>
        <position position="66"/>
    </location>
</feature>
<feature type="modified residue" description="Phosphoserine" evidence="1">
    <location>
        <position position="107"/>
    </location>
</feature>
<feature type="modified residue" description="N6-acetyllysine" evidence="1">
    <location>
        <position position="153"/>
    </location>
</feature>
<feature type="modified residue" description="N6-acetyllysine" evidence="1">
    <location>
        <position position="154"/>
    </location>
</feature>
<feature type="splice variant" id="VSP_002119" description="In isoform Short." evidence="5">
    <location>
        <begin position="13"/>
        <end position="21"/>
    </location>
</feature>
<feature type="modified residue" description="Phosphoserine" evidence="8">
    <location sequence="P52164-2">
        <position position="2"/>
    </location>
</feature>
<feature type="modified residue" description="Phosphoserine" evidence="8">
    <location sequence="P52164-2">
        <position position="11"/>
    </location>
</feature>
<organism>
    <name type="scientific">Rattus norvegicus</name>
    <name type="common">Rat</name>
    <dbReference type="NCBI Taxonomy" id="10116"/>
    <lineage>
        <taxon>Eukaryota</taxon>
        <taxon>Metazoa</taxon>
        <taxon>Chordata</taxon>
        <taxon>Craniata</taxon>
        <taxon>Vertebrata</taxon>
        <taxon>Euteleostomi</taxon>
        <taxon>Mammalia</taxon>
        <taxon>Eutheria</taxon>
        <taxon>Euarchontoglires</taxon>
        <taxon>Glires</taxon>
        <taxon>Rodentia</taxon>
        <taxon>Myomorpha</taxon>
        <taxon>Muroidea</taxon>
        <taxon>Muridae</taxon>
        <taxon>Murinae</taxon>
        <taxon>Rattus</taxon>
    </lineage>
</organism>
<proteinExistence type="evidence at protein level"/>
<comment type="function">
    <text evidence="1 4">Transcription regulator. Forms a sequence-specific DNA-binding protein complex with MYC or MAD which recognizes the core sequence 5'-CAC[GA]TG-3'. The MYC:MAX complex is a transcriptional activator, whereas the MAD:MAX complex is a repressor. May repress transcription via the recruitment of a chromatin remodeling complex containing H3 'Lys-9' histone methyltransferase activity. Represses MYC transcriptional activity from E-box elements (By similarity).</text>
</comment>
<comment type="subunit">
    <text evidence="4">Efficient DNA binding requires dimerization with another bHLH protein. Binds DNA as a heterodimer with MYC or MAD. Part of the E2F6.com-1 complex in G0 phase composed of E2F6, MGA, MAX, TFDP1, CBX3, BAT8, EUHMTASE1, RING1, RNF2, MBLR, L3MBTL2 and YAF2. Component of some MLL1/MLL complex, at least composed of the core components KMT2A/MLL1, ASH2L, HCFC1/HCF1, WDR5 and RBBP5, as well as the facultative components BACC1, CHD8, E2F6, HSP70, INO80C, KANSL1, LAS1L, MAX, MCRS1, MGA, MYST1/MOF, PELP1, PHF20, PRP31, RING2, RUVB1/TIP49A, RUVB2/TIP49B, SENP3, TAF1, TAF4, TAF6, TAF7, TAF9 and TEX10. Interacts with SPAG9. The heterodimer MYC:MAX interacts with ABI1; the interaction may enhance MYC:MAX transcriptional activity.</text>
</comment>
<comment type="interaction">
    <interactant intactId="EBI-1184963">
        <id>P52164</id>
    </interactant>
    <interactant intactId="EBI-920097">
        <id>Q9QZM5</id>
        <label>Abi1</label>
    </interactant>
    <organismsDiffer>false</organismsDiffer>
    <experiments>2</experiments>
</comment>
<comment type="interaction">
    <interactant intactId="EBI-1184963">
        <id>P52164</id>
    </interactant>
    <interactant intactId="EBI-447544">
        <id>P01106</id>
        <label>MYC</label>
    </interactant>
    <organismsDiffer>true</organismsDiffer>
    <experiments>4</experiments>
</comment>
<comment type="subcellular location">
    <subcellularLocation>
        <location evidence="2 4">Nucleus</location>
    </subcellularLocation>
    <subcellularLocation>
        <location evidence="4">Cell projection</location>
        <location evidence="4">Dendrite</location>
    </subcellularLocation>
</comment>
<comment type="alternative products">
    <event type="alternative splicing"/>
    <isoform>
        <id>P52164-1</id>
        <name>Long</name>
        <sequence type="displayed"/>
    </isoform>
    <isoform>
        <id>P52164-2</id>
        <name>Short</name>
        <sequence type="described" ref="VSP_002119"/>
    </isoform>
</comment>
<comment type="PTM">
    <text evidence="6">Phosphorylated.</text>
</comment>
<comment type="similarity">
    <text evidence="6">Belongs to the MAX family.</text>
</comment>
<gene>
    <name evidence="7" type="primary">Max</name>
</gene>
<sequence>MSDNDDIEVESDEEQPRFQSAADKRAHHNALERKRRDHIKDSFHSLRDSVPSLQGEKASRAQILDKATEYIQYMRRKNHTHQQDIDDLKRQNALLEQQVRALEKARSSAQLQTNYPSSDNSLYTNAKGGTISAFDGGSDSSSESEPEEPQNRKKLRMEAS</sequence>
<keyword id="KW-0007">Acetylation</keyword>
<keyword id="KW-0010">Activator</keyword>
<keyword id="KW-0025">Alternative splicing</keyword>
<keyword id="KW-0966">Cell projection</keyword>
<keyword id="KW-0238">DNA-binding</keyword>
<keyword id="KW-0539">Nucleus</keyword>
<keyword id="KW-0597">Phosphoprotein</keyword>
<keyword id="KW-1185">Reference proteome</keyword>
<keyword id="KW-0678">Repressor</keyword>
<keyword id="KW-0804">Transcription</keyword>
<keyword id="KW-0805">Transcription regulation</keyword>